<protein>
    <recommendedName>
        <fullName evidence="1">Large ribosomal subunit protein uL18</fullName>
    </recommendedName>
    <alternativeName>
        <fullName evidence="2">50S ribosomal protein L18</fullName>
    </alternativeName>
</protein>
<gene>
    <name evidence="1" type="primary">rplR</name>
    <name type="ordered locus">EUBELI_00315</name>
</gene>
<feature type="chain" id="PRO_1000214671" description="Large ribosomal subunit protein uL18">
    <location>
        <begin position="1"/>
        <end position="122"/>
    </location>
</feature>
<reference key="1">
    <citation type="journal article" date="2009" name="Proc. Natl. Acad. Sci. U.S.A.">
        <title>Characterizing a model human gut microbiota composed of members of its two dominant bacterial phyla.</title>
        <authorList>
            <person name="Mahowald M.A."/>
            <person name="Rey F.E."/>
            <person name="Seedorf H."/>
            <person name="Turnbaugh P.J."/>
            <person name="Fulton R.S."/>
            <person name="Wollam A."/>
            <person name="Shah N."/>
            <person name="Wang C."/>
            <person name="Magrini V."/>
            <person name="Wilson R.K."/>
            <person name="Cantarel B.L."/>
            <person name="Coutinho P.M."/>
            <person name="Henrissat B."/>
            <person name="Crock L.W."/>
            <person name="Russell A."/>
            <person name="Verberkmoes N.C."/>
            <person name="Hettich R.L."/>
            <person name="Gordon J.I."/>
        </authorList>
    </citation>
    <scope>NUCLEOTIDE SEQUENCE [LARGE SCALE GENOMIC DNA]</scope>
    <source>
        <strain>ATCC 27750 / DSM 3376 / VPI C15-48 / C15-B4</strain>
    </source>
</reference>
<proteinExistence type="inferred from homology"/>
<dbReference type="EMBL" id="CP001104">
    <property type="protein sequence ID" value="ACR71351.1"/>
    <property type="molecule type" value="Genomic_DNA"/>
</dbReference>
<dbReference type="RefSeq" id="WP_012738588.1">
    <property type="nucleotide sequence ID" value="NC_012778.1"/>
</dbReference>
<dbReference type="SMR" id="C4Z2U6"/>
<dbReference type="STRING" id="515620.EUBELI_00315"/>
<dbReference type="GeneID" id="41355088"/>
<dbReference type="KEGG" id="eel:EUBELI_00315"/>
<dbReference type="eggNOG" id="COG0256">
    <property type="taxonomic scope" value="Bacteria"/>
</dbReference>
<dbReference type="HOGENOM" id="CLU_098841_0_1_9"/>
<dbReference type="Proteomes" id="UP000001476">
    <property type="component" value="Chromosome"/>
</dbReference>
<dbReference type="GO" id="GO:0022625">
    <property type="term" value="C:cytosolic large ribosomal subunit"/>
    <property type="evidence" value="ECO:0007669"/>
    <property type="project" value="TreeGrafter"/>
</dbReference>
<dbReference type="GO" id="GO:0008097">
    <property type="term" value="F:5S rRNA binding"/>
    <property type="evidence" value="ECO:0007669"/>
    <property type="project" value="TreeGrafter"/>
</dbReference>
<dbReference type="GO" id="GO:0003735">
    <property type="term" value="F:structural constituent of ribosome"/>
    <property type="evidence" value="ECO:0007669"/>
    <property type="project" value="InterPro"/>
</dbReference>
<dbReference type="GO" id="GO:0006412">
    <property type="term" value="P:translation"/>
    <property type="evidence" value="ECO:0007669"/>
    <property type="project" value="UniProtKB-UniRule"/>
</dbReference>
<dbReference type="CDD" id="cd00432">
    <property type="entry name" value="Ribosomal_L18_L5e"/>
    <property type="match status" value="1"/>
</dbReference>
<dbReference type="FunFam" id="3.30.420.100:FF:000001">
    <property type="entry name" value="50S ribosomal protein L18"/>
    <property type="match status" value="1"/>
</dbReference>
<dbReference type="Gene3D" id="3.30.420.100">
    <property type="match status" value="1"/>
</dbReference>
<dbReference type="HAMAP" id="MF_01337_B">
    <property type="entry name" value="Ribosomal_uL18_B"/>
    <property type="match status" value="1"/>
</dbReference>
<dbReference type="InterPro" id="IPR004389">
    <property type="entry name" value="Ribosomal_uL18_bac-type"/>
</dbReference>
<dbReference type="InterPro" id="IPR005484">
    <property type="entry name" value="Ribosomal_uL18_bac/euk"/>
</dbReference>
<dbReference type="NCBIfam" id="TIGR00060">
    <property type="entry name" value="L18_bact"/>
    <property type="match status" value="1"/>
</dbReference>
<dbReference type="PANTHER" id="PTHR12899">
    <property type="entry name" value="39S RIBOSOMAL PROTEIN L18, MITOCHONDRIAL"/>
    <property type="match status" value="1"/>
</dbReference>
<dbReference type="PANTHER" id="PTHR12899:SF3">
    <property type="entry name" value="LARGE RIBOSOMAL SUBUNIT PROTEIN UL18M"/>
    <property type="match status" value="1"/>
</dbReference>
<dbReference type="Pfam" id="PF00861">
    <property type="entry name" value="Ribosomal_L18p"/>
    <property type="match status" value="1"/>
</dbReference>
<dbReference type="SUPFAM" id="SSF53137">
    <property type="entry name" value="Translational machinery components"/>
    <property type="match status" value="1"/>
</dbReference>
<evidence type="ECO:0000255" key="1">
    <source>
        <dbReference type="HAMAP-Rule" id="MF_01337"/>
    </source>
</evidence>
<evidence type="ECO:0000305" key="2"/>
<keyword id="KW-1185">Reference proteome</keyword>
<keyword id="KW-0687">Ribonucleoprotein</keyword>
<keyword id="KW-0689">Ribosomal protein</keyword>
<keyword id="KW-0694">RNA-binding</keyword>
<keyword id="KW-0699">rRNA-binding</keyword>
<name>RL18_LACE2</name>
<comment type="function">
    <text evidence="1">This is one of the proteins that bind and probably mediate the attachment of the 5S RNA into the large ribosomal subunit, where it forms part of the central protuberance.</text>
</comment>
<comment type="subunit">
    <text evidence="1">Part of the 50S ribosomal subunit; part of the 5S rRNA/L5/L18/L25 subcomplex. Contacts the 5S and 23S rRNAs.</text>
</comment>
<comment type="similarity">
    <text evidence="1">Belongs to the universal ribosomal protein uL18 family.</text>
</comment>
<accession>C4Z2U6</accession>
<organism>
    <name type="scientific">Lachnospira eligens (strain ATCC 27750 / DSM 3376 / VPI C15-48 / C15-B4)</name>
    <name type="common">Eubacterium eligens</name>
    <dbReference type="NCBI Taxonomy" id="515620"/>
    <lineage>
        <taxon>Bacteria</taxon>
        <taxon>Bacillati</taxon>
        <taxon>Bacillota</taxon>
        <taxon>Clostridia</taxon>
        <taxon>Lachnospirales</taxon>
        <taxon>Lachnospiraceae</taxon>
        <taxon>Lachnospira</taxon>
    </lineage>
</organism>
<sequence length="122" mass="13477">MVSKKSRTVVREQKHRRLRNRFSGTAERPRLAVFRSNNHMYAQIIDDTVGKTLVSASTLDKEVKAELEKTNNVEAAAAVGTVVAKRALEKGIKTVVYDRGGFIYAGKIKALAEAAREAGLEF</sequence>